<evidence type="ECO:0000255" key="1">
    <source>
        <dbReference type="HAMAP-Rule" id="MF_01364"/>
    </source>
</evidence>
<evidence type="ECO:0000305" key="2"/>
<sequence>MAKKSMIAKQKRTPKFKVRAYTRCERCGRPHSVYRKFKLCRICFRELAYKGQLPGIKKASW</sequence>
<dbReference type="EMBL" id="CP001638">
    <property type="protein sequence ID" value="ACS23064.1"/>
    <property type="molecule type" value="Genomic_DNA"/>
</dbReference>
<dbReference type="SMR" id="C5D3T0"/>
<dbReference type="STRING" id="471223.GWCH70_0124"/>
<dbReference type="KEGG" id="gwc:GWCH70_0124"/>
<dbReference type="eggNOG" id="COG0199">
    <property type="taxonomic scope" value="Bacteria"/>
</dbReference>
<dbReference type="HOGENOM" id="CLU_139869_3_0_9"/>
<dbReference type="OrthoDB" id="9810484at2"/>
<dbReference type="GO" id="GO:0015935">
    <property type="term" value="C:small ribosomal subunit"/>
    <property type="evidence" value="ECO:0007669"/>
    <property type="project" value="TreeGrafter"/>
</dbReference>
<dbReference type="GO" id="GO:0019843">
    <property type="term" value="F:rRNA binding"/>
    <property type="evidence" value="ECO:0007669"/>
    <property type="project" value="UniProtKB-UniRule"/>
</dbReference>
<dbReference type="GO" id="GO:0003735">
    <property type="term" value="F:structural constituent of ribosome"/>
    <property type="evidence" value="ECO:0007669"/>
    <property type="project" value="InterPro"/>
</dbReference>
<dbReference type="GO" id="GO:0008270">
    <property type="term" value="F:zinc ion binding"/>
    <property type="evidence" value="ECO:0007669"/>
    <property type="project" value="UniProtKB-UniRule"/>
</dbReference>
<dbReference type="GO" id="GO:0006412">
    <property type="term" value="P:translation"/>
    <property type="evidence" value="ECO:0007669"/>
    <property type="project" value="UniProtKB-UniRule"/>
</dbReference>
<dbReference type="FunFam" id="4.10.830.10:FF:000001">
    <property type="entry name" value="30S ribosomal protein S14 type Z"/>
    <property type="match status" value="1"/>
</dbReference>
<dbReference type="Gene3D" id="4.10.830.10">
    <property type="entry name" value="30s Ribosomal Protein S14, Chain N"/>
    <property type="match status" value="1"/>
</dbReference>
<dbReference type="HAMAP" id="MF_01364_B">
    <property type="entry name" value="Ribosomal_uS14_2_B"/>
    <property type="match status" value="1"/>
</dbReference>
<dbReference type="InterPro" id="IPR001209">
    <property type="entry name" value="Ribosomal_uS14"/>
</dbReference>
<dbReference type="InterPro" id="IPR023053">
    <property type="entry name" value="Ribosomal_uS14_bact"/>
</dbReference>
<dbReference type="InterPro" id="IPR018271">
    <property type="entry name" value="Ribosomal_uS14_CS"/>
</dbReference>
<dbReference type="InterPro" id="IPR043140">
    <property type="entry name" value="Ribosomal_uS14_sf"/>
</dbReference>
<dbReference type="NCBIfam" id="NF005974">
    <property type="entry name" value="PRK08061.1"/>
    <property type="match status" value="1"/>
</dbReference>
<dbReference type="PANTHER" id="PTHR19836">
    <property type="entry name" value="30S RIBOSOMAL PROTEIN S14"/>
    <property type="match status" value="1"/>
</dbReference>
<dbReference type="PANTHER" id="PTHR19836:SF26">
    <property type="entry name" value="SMALL RIBOSOMAL SUBUNIT PROTEIN US14B"/>
    <property type="match status" value="1"/>
</dbReference>
<dbReference type="Pfam" id="PF00253">
    <property type="entry name" value="Ribosomal_S14"/>
    <property type="match status" value="1"/>
</dbReference>
<dbReference type="SUPFAM" id="SSF57716">
    <property type="entry name" value="Glucocorticoid receptor-like (DNA-binding domain)"/>
    <property type="match status" value="1"/>
</dbReference>
<dbReference type="PROSITE" id="PS00527">
    <property type="entry name" value="RIBOSOMAL_S14"/>
    <property type="match status" value="1"/>
</dbReference>
<gene>
    <name evidence="1" type="primary">rpsZ</name>
    <name evidence="1" type="synonym">rpsN</name>
    <name type="ordered locus">GWCH70_0124</name>
</gene>
<comment type="function">
    <text evidence="1">Binds 16S rRNA, required for the assembly of 30S particles and may also be responsible for determining the conformation of the 16S rRNA at the A site.</text>
</comment>
<comment type="cofactor">
    <cofactor evidence="1">
        <name>Zn(2+)</name>
        <dbReference type="ChEBI" id="CHEBI:29105"/>
    </cofactor>
    <text evidence="1">Binds 1 zinc ion per subunit.</text>
</comment>
<comment type="subunit">
    <text evidence="1">Part of the 30S ribosomal subunit. Contacts proteins S3 and S10.</text>
</comment>
<comment type="similarity">
    <text evidence="1">Belongs to the universal ribosomal protein uS14 family. Zinc-binding uS14 subfamily.</text>
</comment>
<protein>
    <recommendedName>
        <fullName evidence="1">Small ribosomal subunit protein uS14</fullName>
    </recommendedName>
    <alternativeName>
        <fullName evidence="2">30S ribosomal protein S14 type Z</fullName>
    </alternativeName>
</protein>
<accession>C5D3T0</accession>
<keyword id="KW-0479">Metal-binding</keyword>
<keyword id="KW-0687">Ribonucleoprotein</keyword>
<keyword id="KW-0689">Ribosomal protein</keyword>
<keyword id="KW-0694">RNA-binding</keyword>
<keyword id="KW-0699">rRNA-binding</keyword>
<keyword id="KW-0862">Zinc</keyword>
<feature type="chain" id="PRO_1000214913" description="Small ribosomal subunit protein uS14">
    <location>
        <begin position="1"/>
        <end position="61"/>
    </location>
</feature>
<feature type="binding site" evidence="1">
    <location>
        <position position="24"/>
    </location>
    <ligand>
        <name>Zn(2+)</name>
        <dbReference type="ChEBI" id="CHEBI:29105"/>
    </ligand>
</feature>
<feature type="binding site" evidence="1">
    <location>
        <position position="27"/>
    </location>
    <ligand>
        <name>Zn(2+)</name>
        <dbReference type="ChEBI" id="CHEBI:29105"/>
    </ligand>
</feature>
<feature type="binding site" evidence="1">
    <location>
        <position position="40"/>
    </location>
    <ligand>
        <name>Zn(2+)</name>
        <dbReference type="ChEBI" id="CHEBI:29105"/>
    </ligand>
</feature>
<feature type="binding site" evidence="1">
    <location>
        <position position="43"/>
    </location>
    <ligand>
        <name>Zn(2+)</name>
        <dbReference type="ChEBI" id="CHEBI:29105"/>
    </ligand>
</feature>
<proteinExistence type="inferred from homology"/>
<name>RS14Z_GEOSW</name>
<reference key="1">
    <citation type="submission" date="2009-06" db="EMBL/GenBank/DDBJ databases">
        <title>Complete sequence of chromosome of Geopacillus sp. WCH70.</title>
        <authorList>
            <consortium name="US DOE Joint Genome Institute"/>
            <person name="Lucas S."/>
            <person name="Copeland A."/>
            <person name="Lapidus A."/>
            <person name="Glavina del Rio T."/>
            <person name="Dalin E."/>
            <person name="Tice H."/>
            <person name="Bruce D."/>
            <person name="Goodwin L."/>
            <person name="Pitluck S."/>
            <person name="Chertkov O."/>
            <person name="Brettin T."/>
            <person name="Detter J.C."/>
            <person name="Han C."/>
            <person name="Larimer F."/>
            <person name="Land M."/>
            <person name="Hauser L."/>
            <person name="Kyrpides N."/>
            <person name="Mikhailova N."/>
            <person name="Brumm P."/>
            <person name="Mead D.A."/>
            <person name="Richardson P."/>
        </authorList>
    </citation>
    <scope>NUCLEOTIDE SEQUENCE [LARGE SCALE GENOMIC DNA]</scope>
    <source>
        <strain>WCH70</strain>
    </source>
</reference>
<organism>
    <name type="scientific">Geobacillus sp. (strain WCH70)</name>
    <dbReference type="NCBI Taxonomy" id="471223"/>
    <lineage>
        <taxon>Bacteria</taxon>
        <taxon>Bacillati</taxon>
        <taxon>Bacillota</taxon>
        <taxon>Bacilli</taxon>
        <taxon>Bacillales</taxon>
        <taxon>Anoxybacillaceae</taxon>
        <taxon>Geobacillus</taxon>
    </lineage>
</organism>